<proteinExistence type="evidence at transcript level"/>
<gene>
    <name evidence="10" type="primary">Habp2</name>
</gene>
<keyword id="KW-0025">Alternative splicing</keyword>
<keyword id="KW-0165">Cleavage on pair of basic residues</keyword>
<keyword id="KW-1015">Disulfide bond</keyword>
<keyword id="KW-0245">EGF-like domain</keyword>
<keyword id="KW-0378">Hydrolase</keyword>
<keyword id="KW-0420">Kringle</keyword>
<keyword id="KW-0645">Protease</keyword>
<keyword id="KW-1185">Reference proteome</keyword>
<keyword id="KW-0677">Repeat</keyword>
<keyword id="KW-0964">Secreted</keyword>
<keyword id="KW-0720">Serine protease</keyword>
<keyword id="KW-0732">Signal</keyword>
<evidence type="ECO:0000250" key="1">
    <source>
        <dbReference type="UniProtKB" id="Q04756"/>
    </source>
</evidence>
<evidence type="ECO:0000250" key="2">
    <source>
        <dbReference type="UniProtKB" id="Q14520"/>
    </source>
</evidence>
<evidence type="ECO:0000255" key="3">
    <source>
        <dbReference type="PROSITE-ProRule" id="PRU00076"/>
    </source>
</evidence>
<evidence type="ECO:0000255" key="4">
    <source>
        <dbReference type="PROSITE-ProRule" id="PRU00121"/>
    </source>
</evidence>
<evidence type="ECO:0000255" key="5">
    <source>
        <dbReference type="PROSITE-ProRule" id="PRU00274"/>
    </source>
</evidence>
<evidence type="ECO:0000269" key="6">
    <source>
    </source>
</evidence>
<evidence type="ECO:0000303" key="7">
    <source>
    </source>
</evidence>
<evidence type="ECO:0000303" key="8">
    <source>
    </source>
</evidence>
<evidence type="ECO:0000305" key="9"/>
<evidence type="ECO:0000312" key="10">
    <source>
        <dbReference type="MGI" id="MGI:1196378"/>
    </source>
</evidence>
<reference key="1">
    <citation type="journal article" date="1997" name="Biol. Pharm. Bull.">
        <title>Cloning of the cDNA for a mouse homologue of human PHBP: a novel hyaluronan-binding protein.</title>
        <authorList>
            <person name="Hashimoto K."/>
            <person name="Tobe T."/>
            <person name="Sumiya J."/>
            <person name="Saguchi K."/>
            <person name="Sano Y."/>
            <person name="Nakano Y."/>
            <person name="Choi-Miura N.-H."/>
            <person name="Tomita M."/>
        </authorList>
    </citation>
    <scope>NUCLEOTIDE SEQUENCE [MRNA] (ISOFORM 1)</scope>
    <scope>TISSUE SPECIFICITY</scope>
    <source>
        <tissue>Liver</tissue>
    </source>
</reference>
<reference key="2">
    <citation type="journal article" date="2004" name="Genome Res.">
        <title>The status, quality, and expansion of the NIH full-length cDNA project: the Mammalian Gene Collection (MGC).</title>
        <authorList>
            <consortium name="The MGC Project Team"/>
        </authorList>
    </citation>
    <scope>NUCLEOTIDE SEQUENCE [LARGE SCALE MRNA] OF 2-558 (ISOFORM 2)</scope>
    <source>
        <strain>FVB/N</strain>
        <tissue>Kidney</tissue>
    </source>
</reference>
<accession>Q8K0D2</accession>
<dbReference type="EC" id="3.4.21.-" evidence="2"/>
<dbReference type="EMBL" id="BC031775">
    <property type="protein sequence ID" value="AAH31775.1"/>
    <property type="status" value="ALT_INIT"/>
    <property type="molecule type" value="mRNA"/>
</dbReference>
<dbReference type="PIR" id="JC5878">
    <property type="entry name" value="JC5878"/>
</dbReference>
<dbReference type="RefSeq" id="NP_666213.1">
    <property type="nucleotide sequence ID" value="NM_146101.2"/>
</dbReference>
<dbReference type="SMR" id="Q8K0D2"/>
<dbReference type="BioGRID" id="230489">
    <property type="interactions" value="6"/>
</dbReference>
<dbReference type="FunCoup" id="Q8K0D2">
    <property type="interactions" value="488"/>
</dbReference>
<dbReference type="STRING" id="10090.ENSMUSP00000093641"/>
<dbReference type="MEROPS" id="S01.033"/>
<dbReference type="PhosphoSitePlus" id="Q8K0D2"/>
<dbReference type="CPTAC" id="non-CPTAC-3295"/>
<dbReference type="jPOST" id="Q8K0D2"/>
<dbReference type="PaxDb" id="10090-ENSMUSP00000093641"/>
<dbReference type="ProteomicsDB" id="270928">
    <molecule id="Q8K0D2-1"/>
</dbReference>
<dbReference type="ProteomicsDB" id="270929">
    <molecule id="Q8K0D2-2"/>
</dbReference>
<dbReference type="DNASU" id="226243"/>
<dbReference type="GeneID" id="226243"/>
<dbReference type="KEGG" id="mmu:226243"/>
<dbReference type="UCSC" id="uc008hyt.1">
    <molecule id="Q8K0D2-1"/>
    <property type="organism name" value="mouse"/>
</dbReference>
<dbReference type="AGR" id="MGI:1196378"/>
<dbReference type="CTD" id="3026"/>
<dbReference type="MGI" id="MGI:1196378">
    <property type="gene designation" value="Habp2"/>
</dbReference>
<dbReference type="eggNOG" id="KOG1217">
    <property type="taxonomic scope" value="Eukaryota"/>
</dbReference>
<dbReference type="eggNOG" id="KOG3627">
    <property type="taxonomic scope" value="Eukaryota"/>
</dbReference>
<dbReference type="InParanoid" id="Q8K0D2"/>
<dbReference type="OrthoDB" id="9937281at2759"/>
<dbReference type="PhylomeDB" id="Q8K0D2"/>
<dbReference type="BioGRID-ORCS" id="226243">
    <property type="hits" value="0 hits in 64 CRISPR screens"/>
</dbReference>
<dbReference type="ChiTaRS" id="Habp2">
    <property type="organism name" value="mouse"/>
</dbReference>
<dbReference type="PRO" id="PR:Q8K0D2"/>
<dbReference type="Proteomes" id="UP000000589">
    <property type="component" value="Unplaced"/>
</dbReference>
<dbReference type="RNAct" id="Q8K0D2">
    <property type="molecule type" value="protein"/>
</dbReference>
<dbReference type="GO" id="GO:0005576">
    <property type="term" value="C:extracellular region"/>
    <property type="evidence" value="ECO:0007669"/>
    <property type="project" value="UniProtKB-SubCell"/>
</dbReference>
<dbReference type="GO" id="GO:0005509">
    <property type="term" value="F:calcium ion binding"/>
    <property type="evidence" value="ECO:0007669"/>
    <property type="project" value="InterPro"/>
</dbReference>
<dbReference type="GO" id="GO:0008233">
    <property type="term" value="F:peptidase activity"/>
    <property type="evidence" value="ECO:0000266"/>
    <property type="project" value="MGI"/>
</dbReference>
<dbReference type="GO" id="GO:0004252">
    <property type="term" value="F:serine-type endopeptidase activity"/>
    <property type="evidence" value="ECO:0007669"/>
    <property type="project" value="InterPro"/>
</dbReference>
<dbReference type="GO" id="GO:0006508">
    <property type="term" value="P:proteolysis"/>
    <property type="evidence" value="ECO:0000266"/>
    <property type="project" value="MGI"/>
</dbReference>
<dbReference type="CDD" id="cd00054">
    <property type="entry name" value="EGF_CA"/>
    <property type="match status" value="2"/>
</dbReference>
<dbReference type="CDD" id="cd00108">
    <property type="entry name" value="KR"/>
    <property type="match status" value="1"/>
</dbReference>
<dbReference type="CDD" id="cd00190">
    <property type="entry name" value="Tryp_SPc"/>
    <property type="match status" value="1"/>
</dbReference>
<dbReference type="FunFam" id="2.10.25.10:FF:000571">
    <property type="entry name" value="Hyaluronan-binding protein 2"/>
    <property type="match status" value="1"/>
</dbReference>
<dbReference type="FunFam" id="2.40.10.10:FF:000069">
    <property type="entry name" value="Hyaluronan-binding protein 2"/>
    <property type="match status" value="1"/>
</dbReference>
<dbReference type="FunFam" id="2.10.25.10:FF:000463">
    <property type="entry name" value="hyaluronan-binding protein 2"/>
    <property type="match status" value="1"/>
</dbReference>
<dbReference type="FunFam" id="2.40.20.10:FF:000001">
    <property type="entry name" value="Urokinase-type plasminogen activator"/>
    <property type="match status" value="1"/>
</dbReference>
<dbReference type="Gene3D" id="2.10.25.10">
    <property type="entry name" value="Laminin"/>
    <property type="match status" value="3"/>
</dbReference>
<dbReference type="Gene3D" id="2.40.20.10">
    <property type="entry name" value="Plasminogen Kringle 4"/>
    <property type="match status" value="1"/>
</dbReference>
<dbReference type="Gene3D" id="2.40.10.10">
    <property type="entry name" value="Trypsin-like serine proteases"/>
    <property type="match status" value="1"/>
</dbReference>
<dbReference type="InterPro" id="IPR001881">
    <property type="entry name" value="EGF-like_Ca-bd_dom"/>
</dbReference>
<dbReference type="InterPro" id="IPR000742">
    <property type="entry name" value="EGF-like_dom"/>
</dbReference>
<dbReference type="InterPro" id="IPR000001">
    <property type="entry name" value="Kringle"/>
</dbReference>
<dbReference type="InterPro" id="IPR013806">
    <property type="entry name" value="Kringle-like"/>
</dbReference>
<dbReference type="InterPro" id="IPR018056">
    <property type="entry name" value="Kringle_CS"/>
</dbReference>
<dbReference type="InterPro" id="IPR038178">
    <property type="entry name" value="Kringle_sf"/>
</dbReference>
<dbReference type="InterPro" id="IPR009003">
    <property type="entry name" value="Peptidase_S1_PA"/>
</dbReference>
<dbReference type="InterPro" id="IPR043504">
    <property type="entry name" value="Peptidase_S1_PA_chymotrypsin"/>
</dbReference>
<dbReference type="InterPro" id="IPR001314">
    <property type="entry name" value="Peptidase_S1A"/>
</dbReference>
<dbReference type="InterPro" id="IPR050127">
    <property type="entry name" value="Serine_Proteases_S1"/>
</dbReference>
<dbReference type="InterPro" id="IPR001254">
    <property type="entry name" value="Trypsin_dom"/>
</dbReference>
<dbReference type="InterPro" id="IPR018114">
    <property type="entry name" value="TRYPSIN_HIS"/>
</dbReference>
<dbReference type="InterPro" id="IPR033116">
    <property type="entry name" value="TRYPSIN_SER"/>
</dbReference>
<dbReference type="PANTHER" id="PTHR24264:SF40">
    <property type="entry name" value="HYALURONAN-BINDING PROTEIN 2"/>
    <property type="match status" value="1"/>
</dbReference>
<dbReference type="PANTHER" id="PTHR24264">
    <property type="entry name" value="TRYPSIN-RELATED"/>
    <property type="match status" value="1"/>
</dbReference>
<dbReference type="Pfam" id="PF00008">
    <property type="entry name" value="EGF"/>
    <property type="match status" value="2"/>
</dbReference>
<dbReference type="Pfam" id="PF00051">
    <property type="entry name" value="Kringle"/>
    <property type="match status" value="1"/>
</dbReference>
<dbReference type="Pfam" id="PF00089">
    <property type="entry name" value="Trypsin"/>
    <property type="match status" value="1"/>
</dbReference>
<dbReference type="PRINTS" id="PR00722">
    <property type="entry name" value="CHYMOTRYPSIN"/>
</dbReference>
<dbReference type="PRINTS" id="PR00018">
    <property type="entry name" value="KRINGLE"/>
</dbReference>
<dbReference type="SMART" id="SM00181">
    <property type="entry name" value="EGF"/>
    <property type="match status" value="3"/>
</dbReference>
<dbReference type="SMART" id="SM00179">
    <property type="entry name" value="EGF_CA"/>
    <property type="match status" value="2"/>
</dbReference>
<dbReference type="SMART" id="SM00130">
    <property type="entry name" value="KR"/>
    <property type="match status" value="1"/>
</dbReference>
<dbReference type="SMART" id="SM00020">
    <property type="entry name" value="Tryp_SPc"/>
    <property type="match status" value="1"/>
</dbReference>
<dbReference type="SUPFAM" id="SSF57196">
    <property type="entry name" value="EGF/Laminin"/>
    <property type="match status" value="2"/>
</dbReference>
<dbReference type="SUPFAM" id="SSF57440">
    <property type="entry name" value="Kringle-like"/>
    <property type="match status" value="1"/>
</dbReference>
<dbReference type="SUPFAM" id="SSF50494">
    <property type="entry name" value="Trypsin-like serine proteases"/>
    <property type="match status" value="1"/>
</dbReference>
<dbReference type="PROSITE" id="PS00022">
    <property type="entry name" value="EGF_1"/>
    <property type="match status" value="3"/>
</dbReference>
<dbReference type="PROSITE" id="PS01186">
    <property type="entry name" value="EGF_2"/>
    <property type="match status" value="2"/>
</dbReference>
<dbReference type="PROSITE" id="PS50026">
    <property type="entry name" value="EGF_3"/>
    <property type="match status" value="3"/>
</dbReference>
<dbReference type="PROSITE" id="PS00021">
    <property type="entry name" value="KRINGLE_1"/>
    <property type="match status" value="1"/>
</dbReference>
<dbReference type="PROSITE" id="PS50070">
    <property type="entry name" value="KRINGLE_2"/>
    <property type="match status" value="1"/>
</dbReference>
<dbReference type="PROSITE" id="PS50240">
    <property type="entry name" value="TRYPSIN_DOM"/>
    <property type="match status" value="1"/>
</dbReference>
<dbReference type="PROSITE" id="PS00134">
    <property type="entry name" value="TRYPSIN_HIS"/>
    <property type="match status" value="1"/>
</dbReference>
<dbReference type="PROSITE" id="PS00135">
    <property type="entry name" value="TRYPSIN_SER"/>
    <property type="match status" value="1"/>
</dbReference>
<name>HABP2_MOUSE</name>
<organism>
    <name type="scientific">Mus musculus</name>
    <name type="common">Mouse</name>
    <dbReference type="NCBI Taxonomy" id="10090"/>
    <lineage>
        <taxon>Eukaryota</taxon>
        <taxon>Metazoa</taxon>
        <taxon>Chordata</taxon>
        <taxon>Craniata</taxon>
        <taxon>Vertebrata</taxon>
        <taxon>Euteleostomi</taxon>
        <taxon>Mammalia</taxon>
        <taxon>Eutheria</taxon>
        <taxon>Euarchontoglires</taxon>
        <taxon>Glires</taxon>
        <taxon>Rodentia</taxon>
        <taxon>Myomorpha</taxon>
        <taxon>Muroidea</taxon>
        <taxon>Muridae</taxon>
        <taxon>Murinae</taxon>
        <taxon>Mus</taxon>
        <taxon>Mus</taxon>
    </lineage>
</organism>
<protein>
    <recommendedName>
        <fullName evidence="2">Factor VII-activating protease</fullName>
        <shortName evidence="2">FSAP</shortName>
        <ecNumber evidence="2">3.4.21.-</ecNumber>
    </recommendedName>
    <alternativeName>
        <fullName evidence="2">FVII activator</fullName>
    </alternativeName>
    <alternativeName>
        <fullName evidence="2">Hepatocyte growth factor activator-like protein</fullName>
    </alternativeName>
    <alternativeName>
        <fullName>Hyaluronan-binding protein 2</fullName>
    </alternativeName>
    <alternativeName>
        <fullName evidence="8">Plasma hyaluronan-binding protein</fullName>
        <shortName evidence="8">PHBP</shortName>
    </alternativeName>
    <component>
        <recommendedName>
            <fullName evidence="2">Factor VII-activating protease 50 kDa N-terminal heavy chain</fullName>
        </recommendedName>
    </component>
    <component>
        <recommendedName>
            <fullName evidence="2">Factor VII-activating protease 50 kDa N-terminal heavy chain alternate form</fullName>
        </recommendedName>
    </component>
    <component>
        <recommendedName>
            <fullName evidence="2">Factor VII-activating protease 27 kDa C-terminal light chain</fullName>
        </recommendedName>
    </component>
    <component>
        <recommendedName>
            <fullName evidence="2">Factor VII-activating protease 27 kDa C-terminal light chain alternate form</fullName>
        </recommendedName>
    </component>
</protein>
<feature type="signal peptide" evidence="2">
    <location>
        <begin position="1"/>
        <end position="23"/>
    </location>
</feature>
<feature type="chain" id="PRO_0000027903" description="Factor VII-activating protease 50 kDa N-terminal heavy chain" evidence="2">
    <location>
        <begin position="24"/>
        <end position="311"/>
    </location>
</feature>
<feature type="chain" id="PRO_0000027904" description="Factor VII-activating protease 50 kDa N-terminal heavy chain alternate form" evidence="2">
    <location>
        <begin position="28"/>
        <end position="311"/>
    </location>
</feature>
<feature type="chain" id="PRO_0000027905" description="Factor VII-activating protease 27 kDa C-terminal light chain" evidence="2">
    <location>
        <begin position="312"/>
        <end position="558"/>
    </location>
</feature>
<feature type="chain" id="PRO_0000027906" description="Factor VII-activating protease 27 kDa C-terminal light chain alternate form" evidence="2">
    <location>
        <begin position="318"/>
        <end position="558"/>
    </location>
</feature>
<feature type="domain" description="EGF-like 1" evidence="3">
    <location>
        <begin position="71"/>
        <end position="107"/>
    </location>
</feature>
<feature type="domain" description="EGF-like 2" evidence="3">
    <location>
        <begin position="109"/>
        <end position="146"/>
    </location>
</feature>
<feature type="domain" description="EGF-like 3" evidence="3">
    <location>
        <begin position="148"/>
        <end position="186"/>
    </location>
</feature>
<feature type="domain" description="Kringle" evidence="4">
    <location>
        <begin position="191"/>
        <end position="274"/>
    </location>
</feature>
<feature type="domain" description="Peptidase S1" evidence="5">
    <location>
        <begin position="312"/>
        <end position="553"/>
    </location>
</feature>
<feature type="active site" description="Charge relay system" evidence="1 5">
    <location>
        <position position="360"/>
    </location>
</feature>
<feature type="active site" description="Charge relay system" evidence="1 5">
    <location>
        <position position="409"/>
    </location>
</feature>
<feature type="active site" description="Charge relay system" evidence="1 5">
    <location>
        <position position="507"/>
    </location>
</feature>
<feature type="site" description="Cleavage" evidence="2">
    <location>
        <begin position="478"/>
        <end position="479"/>
    </location>
</feature>
<feature type="disulfide bond" evidence="5">
    <location>
        <begin position="75"/>
        <end position="86"/>
    </location>
</feature>
<feature type="disulfide bond" evidence="5">
    <location>
        <begin position="80"/>
        <end position="95"/>
    </location>
</feature>
<feature type="disulfide bond" evidence="5">
    <location>
        <begin position="97"/>
        <end position="106"/>
    </location>
</feature>
<feature type="disulfide bond" evidence="5">
    <location>
        <begin position="113"/>
        <end position="123"/>
    </location>
</feature>
<feature type="disulfide bond" evidence="5">
    <location>
        <begin position="118"/>
        <end position="134"/>
    </location>
</feature>
<feature type="disulfide bond" evidence="5">
    <location>
        <begin position="136"/>
        <end position="145"/>
    </location>
</feature>
<feature type="disulfide bond" evidence="5">
    <location>
        <begin position="152"/>
        <end position="163"/>
    </location>
</feature>
<feature type="disulfide bond" evidence="5">
    <location>
        <begin position="157"/>
        <end position="174"/>
    </location>
</feature>
<feature type="disulfide bond" evidence="5">
    <location>
        <begin position="176"/>
        <end position="185"/>
    </location>
</feature>
<feature type="disulfide bond" evidence="5">
    <location>
        <begin position="192"/>
        <end position="274"/>
    </location>
</feature>
<feature type="disulfide bond" evidence="5">
    <location>
        <begin position="213"/>
        <end position="255"/>
    </location>
</feature>
<feature type="disulfide bond" evidence="5">
    <location>
        <begin position="244"/>
        <end position="269"/>
    </location>
</feature>
<feature type="disulfide bond" evidence="1">
    <location>
        <begin position="299"/>
        <end position="433"/>
    </location>
</feature>
<feature type="disulfide bond" description="Interchain (with C-521)" evidence="1">
    <location>
        <position position="299"/>
    </location>
</feature>
<feature type="disulfide bond" evidence="1 5">
    <location>
        <begin position="345"/>
        <end position="361"/>
    </location>
</feature>
<feature type="disulfide bond" evidence="1">
    <location>
        <begin position="353"/>
        <end position="422"/>
    </location>
</feature>
<feature type="disulfide bond" description="Interchain (with C-394)" evidence="1">
    <location>
        <position position="433"/>
    </location>
</feature>
<feature type="disulfide bond" evidence="1 5">
    <location>
        <begin position="445"/>
        <end position="513"/>
    </location>
</feature>
<feature type="disulfide bond" evidence="1 5">
    <location>
        <begin position="475"/>
        <end position="491"/>
    </location>
</feature>
<feature type="disulfide bond" evidence="1 5">
    <location>
        <begin position="503"/>
        <end position="531"/>
    </location>
</feature>
<feature type="splice variant" id="VSP_015395" description="In isoform 2." evidence="7">
    <location>
        <begin position="36"/>
        <end position="72"/>
    </location>
</feature>
<comment type="function">
    <text evidence="2">Cleaves the alpha-chain at multiple sites and the beta-chain between 'Lys-53' and 'Lys-54' but not the gamma-chain of fibrinogen and therefore does not initiate the formation of the fibrin clot and does not cause the fibrinolysis directly. It does not cleave (activate) prothrombin and plasminogen but converts the inactive single chain urinary plasminogen activator (pro-urokinase) to the active two chain form. Activates coagulation factor VII. May function as a tumor suppressor negatively regulating cell proliferation and cell migration.</text>
</comment>
<comment type="subunit">
    <text evidence="2">Heterodimer; disulfide-linked. Heterodimer of a 50 kDa heavy and a 27 kDa light chain linked by a disulfide bond.</text>
</comment>
<comment type="subcellular location">
    <subcellularLocation>
        <location evidence="2">Secreted</location>
    </subcellularLocation>
    <text evidence="2">Secreted as an inactive single-chain precursor and is then activated to a heterodimeric form.</text>
</comment>
<comment type="alternative products">
    <event type="alternative splicing"/>
    <isoform>
        <id>Q8K0D2-1</id>
        <name>1</name>
        <sequence type="displayed"/>
    </isoform>
    <isoform>
        <id>Q8K0D2-2</id>
        <name>2</name>
        <sequence type="described" ref="VSP_015395"/>
    </isoform>
</comment>
<comment type="tissue specificity">
    <text evidence="6">Liver and kidney.</text>
</comment>
<comment type="PTM">
    <text evidence="2">Proteolytic cleavage at Gly-23 or Met-27 can give rise to the 50 kDa heavy chain (HC) and cleavage at Arg-311 or Lys-317 can give rise to the 27 kDa light chain (LC). The HC can undergo further proteolytic cleavage giving rise to a 26 kDa fragment. The LC can undergo further proteolytic cleavage at Arg-311 leading to a 17-kDa fragment and at Arg-478 leading to a 8-kDa fragment.</text>
</comment>
<comment type="similarity">
    <text evidence="5">Belongs to the peptidase S1 family.</text>
</comment>
<comment type="sequence caution" evidence="9">
    <conflict type="erroneous initiation">
        <sequence resource="EMBL-CDS" id="AAH31775"/>
    </conflict>
    <text>Truncated N-terminus.</text>
</comment>
<sequence length="558" mass="62357">MFVRMLVFRVLLLIALVGKSVIGLSLMSFIAPPDPDWTPDDYYYSYEQSSPDEDPSVTQTTPENPDWYYEDDDPCQSNPCEHGGDCIIRGDTFSCSCPAPFSGSRCQTAQNKCKDNPCVHGDCLITQKHPYYRCACKYPYTGPDCSKVLPACRPNPCQNGGVCSRHRRRSRFTCACPDQYKGKFCEIGPDDCYVGDGYSYRGKVSKTVNQNPCLYWNSHLLLQETYNMFMEDAETHGIAEHNFCRNPDGDHKPWCFVKVNSEKVKWEYCDVTVCPVPDTPNPVESLLEPVMELPGFESCGKTEVAEHAVKRIYGGFKSTAGKHPWQVSLQTSLPLTTSMPQGHFCGGALIHPCWVLTAAHCTDINTKHLKVVLGDQDLKKTESHEQTFRVEKILKYSQYNERDEIPHNDIALLKLKPVGGHCALESRYVKTVCLPSDPFPSGTECHISGWGVTETGEGSRQLLDAKVKLIANPLCNSRQLYDHTIDDSMICAGNLQKPGSDTCQGDSGGPLTCEKDGTYYVYGIVSWGQECGKKPGVYTQVTKFLNWIKTTMHREAGL</sequence>